<sequence>MQQLNPSEISEIIKGRIDNLDVSSQARNEGTVVSVSDGIVRIHGLADVMYGEMIEFPGGVYGMALNLEQDSVGAVVLGAYDTLAEGMSAKCTGRILEVPVGKELLGRVVDALGNPIDGKGPLGNTETDAVEKVAPGVIWRKSVDQPVQTGYKSVDAMIPVGRGQRELIIGDRQIGKTAMAIDAIINQKDSGIFCVYVAVGQKRSTVANIVRKLEENGALANTIVVVASASESAALQFLAPYAGCTMGEFFRDRGEDALIVYDDLSKQAVAYRQISLLLRRPPGREAYPGDVFYLHSRLLERASRVSEEYVEKFTNGAVTGKTGSLTALPIIETQAGDVSAFVPTNVISITDGQIFLESAMFNSGIRPAVNAGVSVSRVGGAAQTKIIKKLSGGIRTALAQYRELAAFAQFASDLDEATRKQLEHGQRVTELMKQKQYAPMSIADMALSLYAAERGFLTDVEIAKIGSFEQALIAYFNRDHAELMAKINVKGDFNDEIDAGIKAGIEKFKATQTW</sequence>
<reference key="1">
    <citation type="submission" date="2008-02" db="EMBL/GenBank/DDBJ databases">
        <title>Complete sequence of Pseudomonas putida W619.</title>
        <authorList>
            <person name="Copeland A."/>
            <person name="Lucas S."/>
            <person name="Lapidus A."/>
            <person name="Barry K."/>
            <person name="Detter J.C."/>
            <person name="Glavina del Rio T."/>
            <person name="Dalin E."/>
            <person name="Tice H."/>
            <person name="Pitluck S."/>
            <person name="Chain P."/>
            <person name="Malfatti S."/>
            <person name="Shin M."/>
            <person name="Vergez L."/>
            <person name="Schmutz J."/>
            <person name="Larimer F."/>
            <person name="Land M."/>
            <person name="Hauser L."/>
            <person name="Kyrpides N."/>
            <person name="Kim E."/>
            <person name="Taghavi S."/>
            <person name="Vangronsveld D."/>
            <person name="van der Lelie D."/>
            <person name="Richardson P."/>
        </authorList>
    </citation>
    <scope>NUCLEOTIDE SEQUENCE [LARGE SCALE GENOMIC DNA]</scope>
    <source>
        <strain>W619</strain>
    </source>
</reference>
<proteinExistence type="inferred from homology"/>
<feature type="chain" id="PRO_1000143424" description="ATP synthase subunit alpha">
    <location>
        <begin position="1"/>
        <end position="514"/>
    </location>
</feature>
<feature type="binding site" evidence="1">
    <location>
        <begin position="170"/>
        <end position="177"/>
    </location>
    <ligand>
        <name>ATP</name>
        <dbReference type="ChEBI" id="CHEBI:30616"/>
    </ligand>
</feature>
<feature type="site" description="Required for activity" evidence="1">
    <location>
        <position position="374"/>
    </location>
</feature>
<dbReference type="EC" id="7.1.2.2" evidence="1"/>
<dbReference type="EMBL" id="CP000949">
    <property type="protein sequence ID" value="ACA75677.1"/>
    <property type="molecule type" value="Genomic_DNA"/>
</dbReference>
<dbReference type="SMR" id="B1JFU3"/>
<dbReference type="STRING" id="390235.PputW619_5202"/>
<dbReference type="KEGG" id="ppw:PputW619_5202"/>
<dbReference type="eggNOG" id="COG0056">
    <property type="taxonomic scope" value="Bacteria"/>
</dbReference>
<dbReference type="HOGENOM" id="CLU_010091_2_1_6"/>
<dbReference type="OrthoDB" id="9803053at2"/>
<dbReference type="GO" id="GO:0005886">
    <property type="term" value="C:plasma membrane"/>
    <property type="evidence" value="ECO:0007669"/>
    <property type="project" value="UniProtKB-SubCell"/>
</dbReference>
<dbReference type="GO" id="GO:0045259">
    <property type="term" value="C:proton-transporting ATP synthase complex"/>
    <property type="evidence" value="ECO:0007669"/>
    <property type="project" value="UniProtKB-KW"/>
</dbReference>
<dbReference type="GO" id="GO:0043531">
    <property type="term" value="F:ADP binding"/>
    <property type="evidence" value="ECO:0007669"/>
    <property type="project" value="TreeGrafter"/>
</dbReference>
<dbReference type="GO" id="GO:0005524">
    <property type="term" value="F:ATP binding"/>
    <property type="evidence" value="ECO:0007669"/>
    <property type="project" value="UniProtKB-UniRule"/>
</dbReference>
<dbReference type="GO" id="GO:0046933">
    <property type="term" value="F:proton-transporting ATP synthase activity, rotational mechanism"/>
    <property type="evidence" value="ECO:0007669"/>
    <property type="project" value="UniProtKB-UniRule"/>
</dbReference>
<dbReference type="CDD" id="cd18113">
    <property type="entry name" value="ATP-synt_F1_alpha_C"/>
    <property type="match status" value="1"/>
</dbReference>
<dbReference type="CDD" id="cd18116">
    <property type="entry name" value="ATP-synt_F1_alpha_N"/>
    <property type="match status" value="1"/>
</dbReference>
<dbReference type="CDD" id="cd01132">
    <property type="entry name" value="F1-ATPase_alpha_CD"/>
    <property type="match status" value="1"/>
</dbReference>
<dbReference type="FunFam" id="1.20.150.20:FF:000001">
    <property type="entry name" value="ATP synthase subunit alpha"/>
    <property type="match status" value="1"/>
</dbReference>
<dbReference type="FunFam" id="2.40.30.20:FF:000001">
    <property type="entry name" value="ATP synthase subunit alpha"/>
    <property type="match status" value="1"/>
</dbReference>
<dbReference type="FunFam" id="3.40.50.300:FF:000002">
    <property type="entry name" value="ATP synthase subunit alpha"/>
    <property type="match status" value="1"/>
</dbReference>
<dbReference type="Gene3D" id="2.40.30.20">
    <property type="match status" value="1"/>
</dbReference>
<dbReference type="Gene3D" id="1.20.150.20">
    <property type="entry name" value="ATP synthase alpha/beta chain, C-terminal domain"/>
    <property type="match status" value="1"/>
</dbReference>
<dbReference type="Gene3D" id="3.40.50.300">
    <property type="entry name" value="P-loop containing nucleotide triphosphate hydrolases"/>
    <property type="match status" value="1"/>
</dbReference>
<dbReference type="HAMAP" id="MF_01346">
    <property type="entry name" value="ATP_synth_alpha_bact"/>
    <property type="match status" value="1"/>
</dbReference>
<dbReference type="InterPro" id="IPR023366">
    <property type="entry name" value="ATP_synth_asu-like_sf"/>
</dbReference>
<dbReference type="InterPro" id="IPR000793">
    <property type="entry name" value="ATP_synth_asu_C"/>
</dbReference>
<dbReference type="InterPro" id="IPR038376">
    <property type="entry name" value="ATP_synth_asu_C_sf"/>
</dbReference>
<dbReference type="InterPro" id="IPR033732">
    <property type="entry name" value="ATP_synth_F1_a_nt-bd_dom"/>
</dbReference>
<dbReference type="InterPro" id="IPR005294">
    <property type="entry name" value="ATP_synth_F1_asu"/>
</dbReference>
<dbReference type="InterPro" id="IPR020003">
    <property type="entry name" value="ATPase_a/bsu_AS"/>
</dbReference>
<dbReference type="InterPro" id="IPR004100">
    <property type="entry name" value="ATPase_F1/V1/A1_a/bsu_N"/>
</dbReference>
<dbReference type="InterPro" id="IPR036121">
    <property type="entry name" value="ATPase_F1/V1/A1_a/bsu_N_sf"/>
</dbReference>
<dbReference type="InterPro" id="IPR000194">
    <property type="entry name" value="ATPase_F1/V1/A1_a/bsu_nucl-bd"/>
</dbReference>
<dbReference type="InterPro" id="IPR027417">
    <property type="entry name" value="P-loop_NTPase"/>
</dbReference>
<dbReference type="NCBIfam" id="TIGR00962">
    <property type="entry name" value="atpA"/>
    <property type="match status" value="1"/>
</dbReference>
<dbReference type="NCBIfam" id="NF009884">
    <property type="entry name" value="PRK13343.1"/>
    <property type="match status" value="1"/>
</dbReference>
<dbReference type="PANTHER" id="PTHR48082">
    <property type="entry name" value="ATP SYNTHASE SUBUNIT ALPHA, MITOCHONDRIAL"/>
    <property type="match status" value="1"/>
</dbReference>
<dbReference type="PANTHER" id="PTHR48082:SF2">
    <property type="entry name" value="ATP SYNTHASE SUBUNIT ALPHA, MITOCHONDRIAL"/>
    <property type="match status" value="1"/>
</dbReference>
<dbReference type="Pfam" id="PF00006">
    <property type="entry name" value="ATP-synt_ab"/>
    <property type="match status" value="1"/>
</dbReference>
<dbReference type="Pfam" id="PF00306">
    <property type="entry name" value="ATP-synt_ab_C"/>
    <property type="match status" value="1"/>
</dbReference>
<dbReference type="Pfam" id="PF02874">
    <property type="entry name" value="ATP-synt_ab_N"/>
    <property type="match status" value="1"/>
</dbReference>
<dbReference type="PIRSF" id="PIRSF039088">
    <property type="entry name" value="F_ATPase_subunit_alpha"/>
    <property type="match status" value="1"/>
</dbReference>
<dbReference type="SUPFAM" id="SSF47917">
    <property type="entry name" value="C-terminal domain of alpha and beta subunits of F1 ATP synthase"/>
    <property type="match status" value="1"/>
</dbReference>
<dbReference type="SUPFAM" id="SSF50615">
    <property type="entry name" value="N-terminal domain of alpha and beta subunits of F1 ATP synthase"/>
    <property type="match status" value="1"/>
</dbReference>
<dbReference type="SUPFAM" id="SSF52540">
    <property type="entry name" value="P-loop containing nucleoside triphosphate hydrolases"/>
    <property type="match status" value="1"/>
</dbReference>
<dbReference type="PROSITE" id="PS00152">
    <property type="entry name" value="ATPASE_ALPHA_BETA"/>
    <property type="match status" value="1"/>
</dbReference>
<protein>
    <recommendedName>
        <fullName evidence="1">ATP synthase subunit alpha</fullName>
        <ecNumber evidence="1">7.1.2.2</ecNumber>
    </recommendedName>
    <alternativeName>
        <fullName evidence="1">ATP synthase F1 sector subunit alpha</fullName>
    </alternativeName>
    <alternativeName>
        <fullName evidence="1">F-ATPase subunit alpha</fullName>
    </alternativeName>
</protein>
<comment type="function">
    <text evidence="1">Produces ATP from ADP in the presence of a proton gradient across the membrane. The alpha chain is a regulatory subunit.</text>
</comment>
<comment type="catalytic activity">
    <reaction evidence="1">
        <text>ATP + H2O + 4 H(+)(in) = ADP + phosphate + 5 H(+)(out)</text>
        <dbReference type="Rhea" id="RHEA:57720"/>
        <dbReference type="ChEBI" id="CHEBI:15377"/>
        <dbReference type="ChEBI" id="CHEBI:15378"/>
        <dbReference type="ChEBI" id="CHEBI:30616"/>
        <dbReference type="ChEBI" id="CHEBI:43474"/>
        <dbReference type="ChEBI" id="CHEBI:456216"/>
        <dbReference type="EC" id="7.1.2.2"/>
    </reaction>
</comment>
<comment type="subunit">
    <text evidence="1">F-type ATPases have 2 components, CF(1) - the catalytic core - and CF(0) - the membrane proton channel. CF(1) has five subunits: alpha(3), beta(3), gamma(1), delta(1), epsilon(1). CF(0) has three main subunits: a(1), b(2) and c(9-12). The alpha and beta chains form an alternating ring which encloses part of the gamma chain. CF(1) is attached to CF(0) by a central stalk formed by the gamma and epsilon chains, while a peripheral stalk is formed by the delta and b chains.</text>
</comment>
<comment type="subcellular location">
    <subcellularLocation>
        <location evidence="1">Cell inner membrane</location>
        <topology evidence="1">Peripheral membrane protein</topology>
    </subcellularLocation>
</comment>
<comment type="similarity">
    <text evidence="1">Belongs to the ATPase alpha/beta chains family.</text>
</comment>
<keyword id="KW-0066">ATP synthesis</keyword>
<keyword id="KW-0067">ATP-binding</keyword>
<keyword id="KW-0997">Cell inner membrane</keyword>
<keyword id="KW-1003">Cell membrane</keyword>
<keyword id="KW-0139">CF(1)</keyword>
<keyword id="KW-0375">Hydrogen ion transport</keyword>
<keyword id="KW-0406">Ion transport</keyword>
<keyword id="KW-0472">Membrane</keyword>
<keyword id="KW-0547">Nucleotide-binding</keyword>
<keyword id="KW-1278">Translocase</keyword>
<keyword id="KW-0813">Transport</keyword>
<accession>B1JFU3</accession>
<name>ATPA_PSEPW</name>
<organism>
    <name type="scientific">Pseudomonas putida (strain W619)</name>
    <dbReference type="NCBI Taxonomy" id="390235"/>
    <lineage>
        <taxon>Bacteria</taxon>
        <taxon>Pseudomonadati</taxon>
        <taxon>Pseudomonadota</taxon>
        <taxon>Gammaproteobacteria</taxon>
        <taxon>Pseudomonadales</taxon>
        <taxon>Pseudomonadaceae</taxon>
        <taxon>Pseudomonas</taxon>
    </lineage>
</organism>
<gene>
    <name evidence="1" type="primary">atpA</name>
    <name type="ordered locus">PputW619_5202</name>
</gene>
<evidence type="ECO:0000255" key="1">
    <source>
        <dbReference type="HAMAP-Rule" id="MF_01346"/>
    </source>
</evidence>